<dbReference type="EC" id="2.7.7.60" evidence="1"/>
<dbReference type="EMBL" id="CP001108">
    <property type="protein sequence ID" value="ACF46484.1"/>
    <property type="molecule type" value="Genomic_DNA"/>
</dbReference>
<dbReference type="RefSeq" id="WP_012506017.1">
    <property type="nucleotide sequence ID" value="NC_011059.1"/>
</dbReference>
<dbReference type="SMR" id="B4S8U7"/>
<dbReference type="STRING" id="290512.Paes_1464"/>
<dbReference type="KEGG" id="paa:Paes_1464"/>
<dbReference type="eggNOG" id="COG1211">
    <property type="taxonomic scope" value="Bacteria"/>
</dbReference>
<dbReference type="HOGENOM" id="CLU_061281_2_2_10"/>
<dbReference type="UniPathway" id="UPA00056">
    <property type="reaction ID" value="UER00093"/>
</dbReference>
<dbReference type="Proteomes" id="UP000002725">
    <property type="component" value="Chromosome"/>
</dbReference>
<dbReference type="GO" id="GO:0050518">
    <property type="term" value="F:2-C-methyl-D-erythritol 4-phosphate cytidylyltransferase activity"/>
    <property type="evidence" value="ECO:0007669"/>
    <property type="project" value="UniProtKB-UniRule"/>
</dbReference>
<dbReference type="GO" id="GO:0019288">
    <property type="term" value="P:isopentenyl diphosphate biosynthetic process, methylerythritol 4-phosphate pathway"/>
    <property type="evidence" value="ECO:0007669"/>
    <property type="project" value="UniProtKB-UniRule"/>
</dbReference>
<dbReference type="CDD" id="cd02516">
    <property type="entry name" value="CDP-ME_synthetase"/>
    <property type="match status" value="1"/>
</dbReference>
<dbReference type="FunFam" id="3.90.550.10:FF:000003">
    <property type="entry name" value="2-C-methyl-D-erythritol 4-phosphate cytidylyltransferase"/>
    <property type="match status" value="1"/>
</dbReference>
<dbReference type="Gene3D" id="3.90.550.10">
    <property type="entry name" value="Spore Coat Polysaccharide Biosynthesis Protein SpsA, Chain A"/>
    <property type="match status" value="1"/>
</dbReference>
<dbReference type="HAMAP" id="MF_00108">
    <property type="entry name" value="IspD"/>
    <property type="match status" value="1"/>
</dbReference>
<dbReference type="InterPro" id="IPR001228">
    <property type="entry name" value="IspD"/>
</dbReference>
<dbReference type="InterPro" id="IPR034683">
    <property type="entry name" value="IspD/TarI"/>
</dbReference>
<dbReference type="InterPro" id="IPR050088">
    <property type="entry name" value="IspD/TarI_cytidylyltransf_bact"/>
</dbReference>
<dbReference type="InterPro" id="IPR018294">
    <property type="entry name" value="ISPD_synthase_CS"/>
</dbReference>
<dbReference type="InterPro" id="IPR029044">
    <property type="entry name" value="Nucleotide-diphossugar_trans"/>
</dbReference>
<dbReference type="NCBIfam" id="TIGR00453">
    <property type="entry name" value="ispD"/>
    <property type="match status" value="1"/>
</dbReference>
<dbReference type="PANTHER" id="PTHR32125">
    <property type="entry name" value="2-C-METHYL-D-ERYTHRITOL 4-PHOSPHATE CYTIDYLYLTRANSFERASE, CHLOROPLASTIC"/>
    <property type="match status" value="1"/>
</dbReference>
<dbReference type="PANTHER" id="PTHR32125:SF4">
    <property type="entry name" value="2-C-METHYL-D-ERYTHRITOL 4-PHOSPHATE CYTIDYLYLTRANSFERASE, CHLOROPLASTIC"/>
    <property type="match status" value="1"/>
</dbReference>
<dbReference type="Pfam" id="PF01128">
    <property type="entry name" value="IspD"/>
    <property type="match status" value="1"/>
</dbReference>
<dbReference type="SUPFAM" id="SSF53448">
    <property type="entry name" value="Nucleotide-diphospho-sugar transferases"/>
    <property type="match status" value="1"/>
</dbReference>
<dbReference type="PROSITE" id="PS01295">
    <property type="entry name" value="ISPD"/>
    <property type="match status" value="1"/>
</dbReference>
<reference key="1">
    <citation type="submission" date="2008-06" db="EMBL/GenBank/DDBJ databases">
        <title>Complete sequence of chromosome of Prosthecochloris aestuarii DSM 271.</title>
        <authorList>
            <consortium name="US DOE Joint Genome Institute"/>
            <person name="Lucas S."/>
            <person name="Copeland A."/>
            <person name="Lapidus A."/>
            <person name="Glavina del Rio T."/>
            <person name="Dalin E."/>
            <person name="Tice H."/>
            <person name="Bruce D."/>
            <person name="Goodwin L."/>
            <person name="Pitluck S."/>
            <person name="Schmutz J."/>
            <person name="Larimer F."/>
            <person name="Land M."/>
            <person name="Hauser L."/>
            <person name="Kyrpides N."/>
            <person name="Anderson I."/>
            <person name="Liu Z."/>
            <person name="Li T."/>
            <person name="Zhao F."/>
            <person name="Overmann J."/>
            <person name="Bryant D.A."/>
            <person name="Richardson P."/>
        </authorList>
    </citation>
    <scope>NUCLEOTIDE SEQUENCE [LARGE SCALE GENOMIC DNA]</scope>
    <source>
        <strain>DSM 271 / SK 413</strain>
    </source>
</reference>
<keyword id="KW-0414">Isoprene biosynthesis</keyword>
<keyword id="KW-0548">Nucleotidyltransferase</keyword>
<keyword id="KW-0808">Transferase</keyword>
<evidence type="ECO:0000255" key="1">
    <source>
        <dbReference type="HAMAP-Rule" id="MF_00108"/>
    </source>
</evidence>
<comment type="function">
    <text evidence="1">Catalyzes the formation of 4-diphosphocytidyl-2-C-methyl-D-erythritol from CTP and 2-C-methyl-D-erythritol 4-phosphate (MEP).</text>
</comment>
<comment type="catalytic activity">
    <reaction evidence="1">
        <text>2-C-methyl-D-erythritol 4-phosphate + CTP + H(+) = 4-CDP-2-C-methyl-D-erythritol + diphosphate</text>
        <dbReference type="Rhea" id="RHEA:13429"/>
        <dbReference type="ChEBI" id="CHEBI:15378"/>
        <dbReference type="ChEBI" id="CHEBI:33019"/>
        <dbReference type="ChEBI" id="CHEBI:37563"/>
        <dbReference type="ChEBI" id="CHEBI:57823"/>
        <dbReference type="ChEBI" id="CHEBI:58262"/>
        <dbReference type="EC" id="2.7.7.60"/>
    </reaction>
</comment>
<comment type="pathway">
    <text evidence="1">Isoprenoid biosynthesis; isopentenyl diphosphate biosynthesis via DXP pathway; isopentenyl diphosphate from 1-deoxy-D-xylulose 5-phosphate: step 2/6.</text>
</comment>
<comment type="similarity">
    <text evidence="1">Belongs to the IspD/TarI cytidylyltransferase family. IspD subfamily.</text>
</comment>
<gene>
    <name evidence="1" type="primary">ispD</name>
    <name type="ordered locus">Paes_1464</name>
</gene>
<feature type="chain" id="PRO_1000094338" description="2-C-methyl-D-erythritol 4-phosphate cytidylyltransferase">
    <location>
        <begin position="1"/>
        <end position="244"/>
    </location>
</feature>
<feature type="site" description="Transition state stabilizer" evidence="1">
    <location>
        <position position="15"/>
    </location>
</feature>
<feature type="site" description="Transition state stabilizer" evidence="1">
    <location>
        <position position="24"/>
    </location>
</feature>
<feature type="site" description="Positions MEP for the nucleophilic attack" evidence="1">
    <location>
        <position position="165"/>
    </location>
</feature>
<feature type="site" description="Positions MEP for the nucleophilic attack" evidence="1">
    <location>
        <position position="223"/>
    </location>
</feature>
<accession>B4S8U7</accession>
<sequence>MSSVAIIAASGVGKRMNLRNGLSKQFLEIGGYPVIYHTLAAFQRASSIDKIYIATKPDSIATLETLAEEHQFSKINAIIAGGKERQDSISNCIELIALHIEKAEIDRPDTILVHDGARPFITPDEIDQIAQLSHHYGACVPATKPKDTIKYISDQPGFFGETLDRSLLLQVQTPQGFASEKLVEAHRKAREAESYATDDAALVEKFFPDQKIKVFEMGYHNIKITTPEDIFLGEAIYAQLQQQS</sequence>
<proteinExistence type="inferred from homology"/>
<organism>
    <name type="scientific">Prosthecochloris aestuarii (strain DSM 271 / SK 413)</name>
    <dbReference type="NCBI Taxonomy" id="290512"/>
    <lineage>
        <taxon>Bacteria</taxon>
        <taxon>Pseudomonadati</taxon>
        <taxon>Chlorobiota</taxon>
        <taxon>Chlorobiia</taxon>
        <taxon>Chlorobiales</taxon>
        <taxon>Chlorobiaceae</taxon>
        <taxon>Prosthecochloris</taxon>
    </lineage>
</organism>
<name>ISPD_PROA2</name>
<protein>
    <recommendedName>
        <fullName evidence="1">2-C-methyl-D-erythritol 4-phosphate cytidylyltransferase</fullName>
        <ecNumber evidence="1">2.7.7.60</ecNumber>
    </recommendedName>
    <alternativeName>
        <fullName evidence="1">4-diphosphocytidyl-2C-methyl-D-erythritol synthase</fullName>
    </alternativeName>
    <alternativeName>
        <fullName evidence="1">MEP cytidylyltransferase</fullName>
        <shortName evidence="1">MCT</shortName>
    </alternativeName>
</protein>